<keyword id="KW-0968">Cytoplasmic vesicle</keyword>
<keyword id="KW-0256">Endoplasmic reticulum</keyword>
<keyword id="KW-0325">Glycoprotein</keyword>
<keyword id="KW-0333">Golgi apparatus</keyword>
<keyword id="KW-0472">Membrane</keyword>
<keyword id="KW-1185">Reference proteome</keyword>
<keyword id="KW-0762">Sugar transport</keyword>
<keyword id="KW-0812">Transmembrane</keyword>
<keyword id="KW-1133">Transmembrane helix</keyword>
<keyword id="KW-0813">Transport</keyword>
<feature type="chain" id="PRO_0000333514" description="GDP-mannose transporter">
    <location>
        <begin position="1"/>
        <end position="392"/>
    </location>
</feature>
<feature type="topological domain" description="Cytoplasmic" evidence="1">
    <location>
        <begin position="1"/>
        <end position="45"/>
    </location>
</feature>
<feature type="transmembrane region" description="Helical" evidence="2">
    <location>
        <begin position="46"/>
        <end position="66"/>
    </location>
</feature>
<feature type="topological domain" description="Lumenal" evidence="1">
    <location>
        <begin position="67"/>
        <end position="76"/>
    </location>
</feature>
<feature type="transmembrane region" description="Helical" evidence="2">
    <location>
        <begin position="77"/>
        <end position="97"/>
    </location>
</feature>
<feature type="topological domain" description="Cytoplasmic" evidence="1">
    <location>
        <begin position="98"/>
        <end position="116"/>
    </location>
</feature>
<feature type="transmembrane region" description="Helical" evidence="2">
    <location>
        <begin position="117"/>
        <end position="139"/>
    </location>
</feature>
<feature type="topological domain" description="Lumenal" evidence="1">
    <location>
        <begin position="140"/>
        <end position="142"/>
    </location>
</feature>
<feature type="transmembrane region" description="Helical" evidence="2">
    <location>
        <begin position="143"/>
        <end position="165"/>
    </location>
</feature>
<feature type="topological domain" description="Cytoplasmic" evidence="1">
    <location>
        <begin position="166"/>
        <end position="171"/>
    </location>
</feature>
<feature type="transmembrane region" description="Helical" evidence="2">
    <location>
        <begin position="172"/>
        <end position="191"/>
    </location>
</feature>
<feature type="topological domain" description="Lumenal" evidence="1">
    <location>
        <begin position="192"/>
        <end position="210"/>
    </location>
</feature>
<feature type="transmembrane region" description="Helical" evidence="2">
    <location>
        <begin position="211"/>
        <end position="231"/>
    </location>
</feature>
<feature type="topological domain" description="Cytoplasmic" evidence="1">
    <location>
        <begin position="232"/>
        <end position="246"/>
    </location>
</feature>
<feature type="transmembrane region" description="Helical" evidence="2">
    <location>
        <begin position="247"/>
        <end position="267"/>
    </location>
</feature>
<feature type="topological domain" description="Lumenal" evidence="1">
    <location>
        <begin position="268"/>
        <end position="285"/>
    </location>
</feature>
<feature type="transmembrane region" description="Helical" evidence="2">
    <location>
        <begin position="286"/>
        <end position="306"/>
    </location>
</feature>
<feature type="topological domain" description="Cytoplasmic" evidence="1">
    <location>
        <begin position="307"/>
        <end position="314"/>
    </location>
</feature>
<feature type="transmembrane region" description="Helical" evidence="2">
    <location>
        <begin position="315"/>
        <end position="337"/>
    </location>
</feature>
<feature type="topological domain" description="Lumenal" evidence="1">
    <location>
        <begin position="338"/>
        <end position="340"/>
    </location>
</feature>
<feature type="transmembrane region" description="Helical" evidence="2">
    <location>
        <begin position="341"/>
        <end position="360"/>
    </location>
</feature>
<feature type="topological domain" description="Cytoplasmic" evidence="1">
    <location>
        <begin position="361"/>
        <end position="392"/>
    </location>
</feature>
<feature type="region of interest" description="Disordered" evidence="3">
    <location>
        <begin position="1"/>
        <end position="25"/>
    </location>
</feature>
<feature type="region of interest" description="Disordered" evidence="3">
    <location>
        <begin position="373"/>
        <end position="392"/>
    </location>
</feature>
<feature type="compositionally biased region" description="Basic and acidic residues" evidence="3">
    <location>
        <begin position="1"/>
        <end position="11"/>
    </location>
</feature>
<feature type="glycosylation site" description="N-linked (GlcNAc...) asparagine" evidence="2">
    <location>
        <position position="268"/>
    </location>
</feature>
<feature type="glycosylation site" description="N-linked (GlcNAc...) asparagine" evidence="2">
    <location>
        <position position="273"/>
    </location>
</feature>
<organism>
    <name type="scientific">Botryotinia fuckeliana (strain B05.10)</name>
    <name type="common">Noble rot fungus</name>
    <name type="synonym">Botrytis cinerea</name>
    <dbReference type="NCBI Taxonomy" id="332648"/>
    <lineage>
        <taxon>Eukaryota</taxon>
        <taxon>Fungi</taxon>
        <taxon>Dikarya</taxon>
        <taxon>Ascomycota</taxon>
        <taxon>Pezizomycotina</taxon>
        <taxon>Leotiomycetes</taxon>
        <taxon>Helotiales</taxon>
        <taxon>Sclerotiniaceae</taxon>
        <taxon>Botrytis</taxon>
    </lineage>
</organism>
<accession>A6RJQ8</accession>
<accession>A0A384JCZ4</accession>
<gene>
    <name type="primary">gmt1</name>
    <name type="synonym">vrg4</name>
    <name type="ORF">BC1G_00679</name>
    <name type="ORF">BCIN_03g04240</name>
</gene>
<evidence type="ECO:0000250" key="1"/>
<evidence type="ECO:0000255" key="2"/>
<evidence type="ECO:0000256" key="3">
    <source>
        <dbReference type="SAM" id="MobiDB-lite"/>
    </source>
</evidence>
<evidence type="ECO:0000305" key="4"/>
<comment type="function">
    <text evidence="1">Involved in the import of GDP-mannose from the cytoplasm into the Golgi lumen.</text>
</comment>
<comment type="subunit">
    <text evidence="1">Homooligomer.</text>
</comment>
<comment type="subcellular location">
    <subcellularLocation>
        <location evidence="1">Golgi apparatus membrane</location>
        <topology evidence="1">Multi-pass membrane protein</topology>
    </subcellularLocation>
    <subcellularLocation>
        <location evidence="1">Cytoplasmic vesicle membrane</location>
        <topology evidence="1">Multi-pass membrane protein</topology>
    </subcellularLocation>
    <subcellularLocation>
        <location evidence="1">Endoplasmic reticulum membrane</location>
        <topology evidence="1">Multi-pass membrane protein</topology>
    </subcellularLocation>
</comment>
<comment type="similarity">
    <text evidence="4">Belongs to the TPT transporter family. SLC35D subfamily.</text>
</comment>
<sequence>MDDKKNEDLEMRNFNGRSSPSQRDPFLAKPGAAAKRGNSAFDLSNVTNSPGISILAYCLASISMTVTNKYCVSGSNWNLNFFYLAIQSVVCIIAIIICKQAGLITNLAPFDTKKAKTWFPISLLLVGMIYTSTKALQFLSVPVYTIFKNLTIIVIAYGEVLWFGGSVTPSALFSFGLMVLSSVVAAWADIQHALYGGGAAQSAEAAAALSTLNAGYAWMGMNVFCTAAYVLSMRKVIKKMNFKDWDTMFYNNLLTIPVLFVCSFIFENWSSENLTKNFPLETRNNLILGMIYSGLATIFISYCSAWCIRVTSSTTYSMVGALNKLPIAVSGLVFFAAPVTFGSVSAIFIGFVSGIVYAWAKVRQNQSKGNILPTTQPVMSASSQSNRDAAKA</sequence>
<name>GMT_BOTFB</name>
<reference key="1">
    <citation type="journal article" date="2011" name="PLoS Genet.">
        <title>Genomic analysis of the necrotrophic fungal pathogens Sclerotinia sclerotiorum and Botrytis cinerea.</title>
        <authorList>
            <person name="Amselem J."/>
            <person name="Cuomo C.A."/>
            <person name="van Kan J.A.L."/>
            <person name="Viaud M."/>
            <person name="Benito E.P."/>
            <person name="Couloux A."/>
            <person name="Coutinho P.M."/>
            <person name="de Vries R.P."/>
            <person name="Dyer P.S."/>
            <person name="Fillinger S."/>
            <person name="Fournier E."/>
            <person name="Gout L."/>
            <person name="Hahn M."/>
            <person name="Kohn L."/>
            <person name="Lapalu N."/>
            <person name="Plummer K.M."/>
            <person name="Pradier J.-M."/>
            <person name="Quevillon E."/>
            <person name="Sharon A."/>
            <person name="Simon A."/>
            <person name="ten Have A."/>
            <person name="Tudzynski B."/>
            <person name="Tudzynski P."/>
            <person name="Wincker P."/>
            <person name="Andrew M."/>
            <person name="Anthouard V."/>
            <person name="Beever R.E."/>
            <person name="Beffa R."/>
            <person name="Benoit I."/>
            <person name="Bouzid O."/>
            <person name="Brault B."/>
            <person name="Chen Z."/>
            <person name="Choquer M."/>
            <person name="Collemare J."/>
            <person name="Cotton P."/>
            <person name="Danchin E.G."/>
            <person name="Da Silva C."/>
            <person name="Gautier A."/>
            <person name="Giraud C."/>
            <person name="Giraud T."/>
            <person name="Gonzalez C."/>
            <person name="Grossetete S."/>
            <person name="Gueldener U."/>
            <person name="Henrissat B."/>
            <person name="Howlett B.J."/>
            <person name="Kodira C."/>
            <person name="Kretschmer M."/>
            <person name="Lappartient A."/>
            <person name="Leroch M."/>
            <person name="Levis C."/>
            <person name="Mauceli E."/>
            <person name="Neuveglise C."/>
            <person name="Oeser B."/>
            <person name="Pearson M."/>
            <person name="Poulain J."/>
            <person name="Poussereau N."/>
            <person name="Quesneville H."/>
            <person name="Rascle C."/>
            <person name="Schumacher J."/>
            <person name="Segurens B."/>
            <person name="Sexton A."/>
            <person name="Silva E."/>
            <person name="Sirven C."/>
            <person name="Soanes D.M."/>
            <person name="Talbot N.J."/>
            <person name="Templeton M."/>
            <person name="Yandava C."/>
            <person name="Yarden O."/>
            <person name="Zeng Q."/>
            <person name="Rollins J.A."/>
            <person name="Lebrun M.-H."/>
            <person name="Dickman M."/>
        </authorList>
    </citation>
    <scope>NUCLEOTIDE SEQUENCE [LARGE SCALE GENOMIC DNA]</scope>
    <source>
        <strain>B05.10</strain>
    </source>
</reference>
<reference key="2">
    <citation type="journal article" date="2012" name="Eukaryot. Cell">
        <title>Genome update of Botrytis cinerea strains B05.10 and T4.</title>
        <authorList>
            <person name="Staats M."/>
            <person name="van Kan J.A.L."/>
        </authorList>
    </citation>
    <scope>NUCLEOTIDE SEQUENCE [LARGE SCALE GENOMIC DNA]</scope>
    <scope>GENOME REANNOTATION</scope>
    <source>
        <strain>B05.10</strain>
    </source>
</reference>
<reference key="3">
    <citation type="journal article" date="2017" name="Mol. Plant Pathol.">
        <title>A gapless genome sequence of the fungus Botrytis cinerea.</title>
        <authorList>
            <person name="van Kan J.A.L."/>
            <person name="Stassen J.H.M."/>
            <person name="Mosbach A."/>
            <person name="van der Lee T.A.J."/>
            <person name="Faino L."/>
            <person name="Farmer A.D."/>
            <person name="Papasotiriou D.G."/>
            <person name="Zhou S."/>
            <person name="Seidl M.F."/>
            <person name="Cottam E."/>
            <person name="Edel D."/>
            <person name="Hahn M."/>
            <person name="Schwartz D.C."/>
            <person name="Dietrich R.A."/>
            <person name="Widdison S."/>
            <person name="Scalliet G."/>
        </authorList>
    </citation>
    <scope>NUCLEOTIDE SEQUENCE [LARGE SCALE GENOMIC DNA]</scope>
    <scope>GENOME REANNOTATION</scope>
    <source>
        <strain>B05.10</strain>
    </source>
</reference>
<dbReference type="EMBL" id="CP009807">
    <property type="protein sequence ID" value="ATZ48184.1"/>
    <property type="molecule type" value="Genomic_DNA"/>
</dbReference>
<dbReference type="RefSeq" id="XP_001560651.1">
    <property type="nucleotide sequence ID" value="XM_001560601.1"/>
</dbReference>
<dbReference type="SMR" id="A6RJQ8"/>
<dbReference type="GlyCosmos" id="A6RJQ8">
    <property type="glycosylation" value="2 sites, No reported glycans"/>
</dbReference>
<dbReference type="EnsemblFungi" id="Bcin03g04240.1">
    <property type="protein sequence ID" value="Bcin03p04240.1"/>
    <property type="gene ID" value="Bcin03g04240"/>
</dbReference>
<dbReference type="GeneID" id="5441191"/>
<dbReference type="KEGG" id="bfu:BCIN_03g04240"/>
<dbReference type="VEuPathDB" id="FungiDB:Bcin03g04240"/>
<dbReference type="OMA" id="VWMLINC"/>
<dbReference type="OrthoDB" id="417037at2759"/>
<dbReference type="Proteomes" id="UP000001798">
    <property type="component" value="Chromosome bcin03"/>
</dbReference>
<dbReference type="GO" id="GO:0030659">
    <property type="term" value="C:cytoplasmic vesicle membrane"/>
    <property type="evidence" value="ECO:0007669"/>
    <property type="project" value="UniProtKB-SubCell"/>
</dbReference>
<dbReference type="GO" id="GO:0005789">
    <property type="term" value="C:endoplasmic reticulum membrane"/>
    <property type="evidence" value="ECO:0007669"/>
    <property type="project" value="UniProtKB-SubCell"/>
</dbReference>
<dbReference type="GO" id="GO:0000139">
    <property type="term" value="C:Golgi membrane"/>
    <property type="evidence" value="ECO:0007669"/>
    <property type="project" value="UniProtKB-SubCell"/>
</dbReference>
<dbReference type="InterPro" id="IPR050186">
    <property type="entry name" value="TPT_transporter"/>
</dbReference>
<dbReference type="NCBIfam" id="TIGR00803">
    <property type="entry name" value="nst"/>
    <property type="match status" value="1"/>
</dbReference>
<dbReference type="PANTHER" id="PTHR11132">
    <property type="entry name" value="SOLUTE CARRIER FAMILY 35"/>
    <property type="match status" value="1"/>
</dbReference>
<dbReference type="SUPFAM" id="SSF103481">
    <property type="entry name" value="Multidrug resistance efflux transporter EmrE"/>
    <property type="match status" value="1"/>
</dbReference>
<proteinExistence type="inferred from homology"/>
<protein>
    <recommendedName>
        <fullName>GDP-mannose transporter</fullName>
        <shortName>GMT</shortName>
    </recommendedName>
</protein>